<dbReference type="EMBL" id="X82636">
    <property type="protein sequence ID" value="CAA57958.1"/>
    <property type="molecule type" value="mRNA"/>
</dbReference>
<dbReference type="EMBL" id="U25064">
    <property type="protein sequence ID" value="AAC52495.1"/>
    <property type="molecule type" value="mRNA"/>
</dbReference>
<dbReference type="RefSeq" id="NP_113875.1">
    <property type="nucleotide sequence ID" value="NM_031687.3"/>
</dbReference>
<dbReference type="RefSeq" id="XP_006252997.1">
    <property type="nucleotide sequence ID" value="XM_006252935.2"/>
</dbReference>
<dbReference type="RefSeq" id="XP_008769368.1">
    <property type="nucleotide sequence ID" value="XM_008771146.4"/>
</dbReference>
<dbReference type="RefSeq" id="XP_063131755.1">
    <property type="nucleotide sequence ID" value="XM_063275685.1"/>
</dbReference>
<dbReference type="SMR" id="P62986"/>
<dbReference type="BioGRID" id="248983">
    <property type="interactions" value="18"/>
</dbReference>
<dbReference type="FunCoup" id="P62986">
    <property type="interactions" value="3238"/>
</dbReference>
<dbReference type="IntAct" id="P62986">
    <property type="interactions" value="1"/>
</dbReference>
<dbReference type="STRING" id="10116.ENSRNOP00000027073"/>
<dbReference type="GlyGen" id="P62986">
    <property type="glycosylation" value="1 site, 1 O-linked glycan (1 site)"/>
</dbReference>
<dbReference type="PhosphoSitePlus" id="P62986"/>
<dbReference type="jPOST" id="P62986"/>
<dbReference type="PaxDb" id="10116-ENSRNOP00000027073"/>
<dbReference type="ABCD" id="P62986">
    <property type="antibodies" value="3 sequenced antibodies"/>
</dbReference>
<dbReference type="Ensembl" id="ENSRNOT00000027073.7">
    <property type="protein sequence ID" value="ENSRNOP00000027073.3"/>
    <property type="gene ID" value="ENSRNOG00000019971.5"/>
</dbReference>
<dbReference type="GeneID" id="64156"/>
<dbReference type="KEGG" id="rno:64156"/>
<dbReference type="AGR" id="RGD:68344"/>
<dbReference type="CTD" id="7311"/>
<dbReference type="RGD" id="68344">
    <property type="gene designation" value="Uba52"/>
</dbReference>
<dbReference type="eggNOG" id="KOG0003">
    <property type="taxonomic scope" value="Eukaryota"/>
</dbReference>
<dbReference type="GeneTree" id="ENSGT00940000153593"/>
<dbReference type="HOGENOM" id="CLU_010412_3_4_1"/>
<dbReference type="InParanoid" id="P62986"/>
<dbReference type="OrthoDB" id="9561001at2759"/>
<dbReference type="PhylomeDB" id="P62986"/>
<dbReference type="TreeFam" id="TF352129"/>
<dbReference type="PRO" id="PR:P62986"/>
<dbReference type="Proteomes" id="UP000002494">
    <property type="component" value="Chromosome 16"/>
</dbReference>
<dbReference type="Bgee" id="ENSRNOG00000019974">
    <property type="expression patterns" value="Expressed in ovary and 20 other cell types or tissues"/>
</dbReference>
<dbReference type="ExpressionAtlas" id="P62986">
    <property type="expression patterns" value="baseline and differential"/>
</dbReference>
<dbReference type="GO" id="GO:0005737">
    <property type="term" value="C:cytoplasm"/>
    <property type="evidence" value="ECO:0000266"/>
    <property type="project" value="RGD"/>
</dbReference>
<dbReference type="GO" id="GO:0098556">
    <property type="term" value="C:cytoplasmic side of rough endoplasmic reticulum membrane"/>
    <property type="evidence" value="ECO:0000266"/>
    <property type="project" value="RGD"/>
</dbReference>
<dbReference type="GO" id="GO:0022625">
    <property type="term" value="C:cytosolic large ribosomal subunit"/>
    <property type="evidence" value="ECO:0000314"/>
    <property type="project" value="RGD"/>
</dbReference>
<dbReference type="GO" id="GO:0022626">
    <property type="term" value="C:cytosolic ribosome"/>
    <property type="evidence" value="ECO:0000266"/>
    <property type="project" value="RGD"/>
</dbReference>
<dbReference type="GO" id="GO:0015934">
    <property type="term" value="C:large ribosomal subunit"/>
    <property type="evidence" value="ECO:0000266"/>
    <property type="project" value="RGD"/>
</dbReference>
<dbReference type="GO" id="GO:0005634">
    <property type="term" value="C:nucleus"/>
    <property type="evidence" value="ECO:0000318"/>
    <property type="project" value="GO_Central"/>
</dbReference>
<dbReference type="GO" id="GO:0045202">
    <property type="term" value="C:synapse"/>
    <property type="evidence" value="ECO:0000266"/>
    <property type="project" value="RGD"/>
</dbReference>
<dbReference type="GO" id="GO:0031386">
    <property type="term" value="F:protein tag activity"/>
    <property type="evidence" value="ECO:0000318"/>
    <property type="project" value="GO_Central"/>
</dbReference>
<dbReference type="GO" id="GO:0003735">
    <property type="term" value="F:structural constituent of ribosome"/>
    <property type="evidence" value="ECO:0000266"/>
    <property type="project" value="RGD"/>
</dbReference>
<dbReference type="GO" id="GO:0031625">
    <property type="term" value="F:ubiquitin protein ligase binding"/>
    <property type="evidence" value="ECO:0000318"/>
    <property type="project" value="GO_Central"/>
</dbReference>
<dbReference type="GO" id="GO:0002181">
    <property type="term" value="P:cytoplasmic translation"/>
    <property type="evidence" value="ECO:0000266"/>
    <property type="project" value="RGD"/>
</dbReference>
<dbReference type="GO" id="GO:0019941">
    <property type="term" value="P:modification-dependent protein catabolic process"/>
    <property type="evidence" value="ECO:0000318"/>
    <property type="project" value="GO_Central"/>
</dbReference>
<dbReference type="GO" id="GO:0016567">
    <property type="term" value="P:protein ubiquitination"/>
    <property type="evidence" value="ECO:0000318"/>
    <property type="project" value="GO_Central"/>
</dbReference>
<dbReference type="GO" id="GO:0017085">
    <property type="term" value="P:response to insecticide"/>
    <property type="evidence" value="ECO:0000270"/>
    <property type="project" value="RGD"/>
</dbReference>
<dbReference type="CDD" id="cd01803">
    <property type="entry name" value="Ubl_ubiquitin"/>
    <property type="match status" value="1"/>
</dbReference>
<dbReference type="FunFam" id="3.10.20.90:FF:000014">
    <property type="entry name" value="Ubiquitin-60S ribosomal L40 fusion"/>
    <property type="match status" value="1"/>
</dbReference>
<dbReference type="FunFam" id="4.10.1060.50:FF:000001">
    <property type="entry name" value="ubiquitin-60S ribosomal protein L40"/>
    <property type="match status" value="1"/>
</dbReference>
<dbReference type="Gene3D" id="4.10.1060.50">
    <property type="match status" value="1"/>
</dbReference>
<dbReference type="Gene3D" id="3.10.20.90">
    <property type="entry name" value="Phosphatidylinositol 3-kinase Catalytic Subunit, Chain A, domain 1"/>
    <property type="match status" value="1"/>
</dbReference>
<dbReference type="InterPro" id="IPR001975">
    <property type="entry name" value="Ribosomal_eL40_dom"/>
</dbReference>
<dbReference type="InterPro" id="IPR038587">
    <property type="entry name" value="Ribosomal_eL40_sf"/>
</dbReference>
<dbReference type="InterPro" id="IPR000626">
    <property type="entry name" value="Ubiquitin-like_dom"/>
</dbReference>
<dbReference type="InterPro" id="IPR029071">
    <property type="entry name" value="Ubiquitin-like_domsf"/>
</dbReference>
<dbReference type="InterPro" id="IPR019954">
    <property type="entry name" value="Ubiquitin_CS"/>
</dbReference>
<dbReference type="InterPro" id="IPR019956">
    <property type="entry name" value="Ubiquitin_dom"/>
</dbReference>
<dbReference type="InterPro" id="IPR050158">
    <property type="entry name" value="Ubiquitin_ubiquitin-like"/>
</dbReference>
<dbReference type="PANTHER" id="PTHR10666">
    <property type="entry name" value="UBIQUITIN"/>
    <property type="match status" value="1"/>
</dbReference>
<dbReference type="Pfam" id="PF01020">
    <property type="entry name" value="Ribosomal_L40e"/>
    <property type="match status" value="1"/>
</dbReference>
<dbReference type="Pfam" id="PF00240">
    <property type="entry name" value="ubiquitin"/>
    <property type="match status" value="1"/>
</dbReference>
<dbReference type="PRINTS" id="PR00348">
    <property type="entry name" value="UBIQUITIN"/>
</dbReference>
<dbReference type="SMART" id="SM01377">
    <property type="entry name" value="Ribosomal_L40e"/>
    <property type="match status" value="1"/>
</dbReference>
<dbReference type="SMART" id="SM00213">
    <property type="entry name" value="UBQ"/>
    <property type="match status" value="1"/>
</dbReference>
<dbReference type="SUPFAM" id="SSF54236">
    <property type="entry name" value="Ubiquitin-like"/>
    <property type="match status" value="1"/>
</dbReference>
<dbReference type="PROSITE" id="PS00299">
    <property type="entry name" value="UBIQUITIN_1"/>
    <property type="match status" value="1"/>
</dbReference>
<dbReference type="PROSITE" id="PS50053">
    <property type="entry name" value="UBIQUITIN_2"/>
    <property type="match status" value="1"/>
</dbReference>
<keyword id="KW-0013">ADP-ribosylation</keyword>
<keyword id="KW-0963">Cytoplasm</keyword>
<keyword id="KW-0903">Direct protein sequencing</keyword>
<keyword id="KW-1017">Isopeptide bond</keyword>
<keyword id="KW-0488">Methylation</keyword>
<keyword id="KW-0539">Nucleus</keyword>
<keyword id="KW-0597">Phosphoprotein</keyword>
<keyword id="KW-1185">Reference proteome</keyword>
<keyword id="KW-0687">Ribonucleoprotein</keyword>
<keyword id="KW-0689">Ribosomal protein</keyword>
<keyword id="KW-0832">Ubl conjugation</keyword>
<comment type="function">
    <molecule>Ubiquitin</molecule>
    <text evidence="3">Exists either covalently attached to another protein, or free (unanchored). When covalently bound, it is conjugated to target proteins via an isopeptide bond either as a monomer (monoubiquitin), a polymer linked via different Lys residues of the ubiquitin (polyubiquitin chains) or a linear polymer linked via the initiator Met of the ubiquitin (linear polyubiquitin chains). Polyubiquitin chains, when attached to a target protein, have different functions depending on the Lys residue of the ubiquitin that is linked: Lys-6-linked may be involved in DNA repair; Lys-11-linked is involved in ERAD (endoplasmic reticulum-associated degradation) and in cell-cycle regulation; Lys-29-linked is involved in proteotoxic stress response and cell cycle; Lys-33-linked is involved in kinase modification; Lys-48-linked is involved in protein degradation via the proteasome; Lys-63-linked is involved in endocytosis, DNA-damage responses as well as in signaling processes leading to activation of the transcription factor NF-kappa-B. Linear polymer chains formed via attachment by the initiator Met lead to cell signaling. Ubiquitin is usually conjugated to Lys residues of target proteins, however, in rare cases, conjugation to Cys or Ser residues has been observed. When polyubiquitin is free (unanchored-polyubiquitin), it also has distinct roles, such as in activation of protein kinases, and in signaling.</text>
</comment>
<comment type="function">
    <molecule>Large ribosomal subunit protein eL40</molecule>
    <text evidence="3">Component of the 60S subunit of the ribosome. Ribosomal protein L40 is essential for translation of a subset of cellular transcripts, and especially for cap-dependent translation of vesicular stomatitis virus mRNAs.</text>
</comment>
<comment type="subunit">
    <molecule>Large ribosomal subunit protein eL40</molecule>
    <text evidence="3">Part of the 60S ribosomal subunit. Interacts with UBQLN1 (via UBA domain).</text>
</comment>
<comment type="subcellular location">
    <molecule>Ubiquitin</molecule>
    <subcellularLocation>
        <location evidence="1">Cytoplasm</location>
    </subcellularLocation>
    <subcellularLocation>
        <location evidence="1">Nucleus</location>
    </subcellularLocation>
</comment>
<comment type="subcellular location">
    <molecule>Large ribosomal subunit protein eL40</molecule>
    <subcellularLocation>
        <location evidence="2">Cytoplasm</location>
    </subcellularLocation>
</comment>
<comment type="PTM">
    <molecule>Ubiquitin</molecule>
    <text evidence="3">Phosphorylated at Ser-65 by PINK1 during mitophagy. Phosphorylated ubiquitin specifically binds and activates parkin (PRKN), triggering mitophagy. Phosphorylation does not affect E1-mediated E2 charging of ubiquitin but affects discharging of E2 enzymes to form polyubiquitin chains. It also affects deubiquitination by deubiquitinase enzymes such as USP30.</text>
</comment>
<comment type="PTM">
    <molecule>Ubiquitin</molecule>
    <text evidence="3">Mono-ADP-ribosylated at the C-terminus by PARP9, a component of the PPAR9-DTX3L complex. ADP-ribosylation requires processing by E1 and E2 enzymes and prevents ubiquitin conjugation to substrates such as histones.</text>
</comment>
<comment type="PTM">
    <molecule>Large ribosomal subunit protein eL40</molecule>
    <text evidence="3">Trimethylation of Lys-98 ('Lys-22' of the mature chain) by SMYD5 promotes translation elongation and protein synthesis.</text>
</comment>
<comment type="miscellaneous">
    <text>Ubiquitin is encoded by 4 different genes. Uba52 and Rps27a genes code for a single copy of ubiquitin fused to the ribosomal proteins eL40 and eS31, respectively. UBB and UBC genes code for a polyubiquitin precursor with exact head to tail repeats, the number of repeats differ between species and strains.</text>
</comment>
<comment type="similarity">
    <text evidence="6">In the N-terminal section; belongs to the ubiquitin family.</text>
</comment>
<comment type="similarity">
    <text evidence="6">In the C-terminal section; belongs to the eukaryotic ribosomal protein eL40 family.</text>
</comment>
<evidence type="ECO:0000250" key="1"/>
<evidence type="ECO:0000250" key="2">
    <source>
        <dbReference type="UniProtKB" id="P62984"/>
    </source>
</evidence>
<evidence type="ECO:0000250" key="3">
    <source>
        <dbReference type="UniProtKB" id="P62987"/>
    </source>
</evidence>
<evidence type="ECO:0000255" key="4">
    <source>
        <dbReference type="PROSITE-ProRule" id="PRU00214"/>
    </source>
</evidence>
<evidence type="ECO:0000269" key="5">
    <source>
    </source>
</evidence>
<evidence type="ECO:0000305" key="6"/>
<reference key="1">
    <citation type="journal article" date="1995" name="Biochem. Biophys. Res. Commun.">
        <title>The carboxyl extensions of two rat ubiquitin fusion proteins are ribosomal proteins S27a and L40.</title>
        <authorList>
            <person name="Chan Y.-L."/>
            <person name="Suzuki K."/>
            <person name="Wool I.G."/>
        </authorList>
    </citation>
    <scope>NUCLEOTIDE SEQUENCE [MRNA]</scope>
    <scope>PROTEIN SEQUENCE OF 77-90</scope>
    <source>
        <strain>Sprague-Dawley</strain>
    </source>
</reference>
<reference key="2">
    <citation type="journal article" date="1994" name="Biochim. Biophys. Acta">
        <title>Differential feeding-related regulation of ubiquitin and calbindin9kDa in rat duodenum.</title>
        <authorList>
            <person name="Hubbard M.J."/>
            <person name="Carne A."/>
        </authorList>
    </citation>
    <scope>PROTEIN SEQUENCE OF 1-76</scope>
    <source>
        <strain>Wistar</strain>
        <tissue>Duodenum</tissue>
    </source>
</reference>
<reference key="3">
    <citation type="submission" date="2007-07" db="UniProtKB">
        <authorList>
            <person name="Lubec G."/>
            <person name="Diao W."/>
            <person name="Kang S.U."/>
        </authorList>
    </citation>
    <scope>PROTEIN SEQUENCE OF 30-42 AND 55-72</scope>
    <scope>IDENTIFICATION BY MASS SPECTROMETRY</scope>
    <source>
        <strain>Sprague-Dawley</strain>
        <tissue>Brain</tissue>
        <tissue>Hippocampus</tissue>
    </source>
</reference>
<reference key="4">
    <citation type="journal article" date="1996" name="Biochem. J.">
        <title>The cDNA for the ubiquitin-52-amino-acid fusion protein from rat encodes a previously unidentified 60 S ribosomal subunit protein.</title>
        <authorList>
            <person name="Redman K.L."/>
            <person name="Burris G.W."/>
        </authorList>
    </citation>
    <scope>NUCLEOTIDE SEQUENCE [MRNA] OF 77-128</scope>
    <source>
        <strain>CD Charles River</strain>
        <tissue>Liver</tissue>
    </source>
</reference>
<reference key="5">
    <citation type="journal article" date="1997" name="Eur. J. Biochem.">
        <title>Post-translational processing of rat ribosomal proteins. Ubiquitous methylation of Lys22 within the zinc-finger motif of RL40 (carboxy-terminal extension protein 52) and tissue-specific methylation of Lys4 in RL29.</title>
        <authorList>
            <person name="Williamson N.A."/>
            <person name="Raliegh J."/>
            <person name="Morrice N.A."/>
            <person name="Wettenhall R.E."/>
        </authorList>
    </citation>
    <scope>METHYLATION AT LYS-98</scope>
</reference>
<name>RL40_RAT</name>
<accession>P62986</accession>
<accession>P02248</accession>
<accession>P02249</accession>
<accession>P02250</accession>
<accession>P14793</accession>
<accession>P62989</accession>
<accession>Q29120</accession>
<accession>Q63446</accession>
<accession>Q91887</accession>
<accession>Q91888</accession>
<organism>
    <name type="scientific">Rattus norvegicus</name>
    <name type="common">Rat</name>
    <dbReference type="NCBI Taxonomy" id="10116"/>
    <lineage>
        <taxon>Eukaryota</taxon>
        <taxon>Metazoa</taxon>
        <taxon>Chordata</taxon>
        <taxon>Craniata</taxon>
        <taxon>Vertebrata</taxon>
        <taxon>Euteleostomi</taxon>
        <taxon>Mammalia</taxon>
        <taxon>Eutheria</taxon>
        <taxon>Euarchontoglires</taxon>
        <taxon>Glires</taxon>
        <taxon>Rodentia</taxon>
        <taxon>Myomorpha</taxon>
        <taxon>Muroidea</taxon>
        <taxon>Muridae</taxon>
        <taxon>Murinae</taxon>
        <taxon>Rattus</taxon>
    </lineage>
</organism>
<gene>
    <name type="primary">Uba52</name>
    <name type="synonym">Ubcep2</name>
</gene>
<sequence length="128" mass="14728">MQIFVKTLTGKTITLEVEPSDTIENVKAKIQDKEGIPPDQQRLIFAGKQLEDGRTLSDYNIQKESTLHLVLRLRGGIIEPSLRQLAQKYNCDKMICRKCYARLHPRAVNCRKKKCGHTNNLRPKKKVK</sequence>
<feature type="chain" id="PRO_0000396439" description="Ubiquitin">
    <location>
        <begin position="1"/>
        <end position="76"/>
    </location>
</feature>
<feature type="chain" id="PRO_0000138754" description="Large ribosomal subunit protein eL40">
    <location>
        <begin position="77"/>
        <end position="128"/>
    </location>
</feature>
<feature type="domain" description="Ubiquitin-like" evidence="4">
    <location>
        <begin position="1"/>
        <end position="76"/>
    </location>
</feature>
<feature type="site" description="Interacts with activating enzyme">
    <location>
        <position position="54"/>
    </location>
</feature>
<feature type="site" description="Essential for function">
    <location>
        <position position="68"/>
    </location>
</feature>
<feature type="site" description="Interacts with activating enzyme">
    <location>
        <position position="72"/>
    </location>
</feature>
<feature type="modified residue" description="Phosphoserine; by PINK1" evidence="3">
    <location>
        <position position="65"/>
    </location>
</feature>
<feature type="modified residue" description="ADP-ribosylglycine" evidence="3">
    <location>
        <position position="76"/>
    </location>
</feature>
<feature type="modified residue" description="N6,N6,N6-trimethyllysine" evidence="5">
    <location>
        <position position="98"/>
    </location>
</feature>
<feature type="cross-link" description="Glycyl lysine isopeptide (Lys-Gly) (interchain with G-Cter in ubiquitin)" evidence="3">
    <location>
        <position position="6"/>
    </location>
</feature>
<feature type="cross-link" description="Glycyl lysine isopeptide (Lys-Gly) (interchain with G-Cter in ubiquitin)" evidence="3">
    <location>
        <position position="11"/>
    </location>
</feature>
<feature type="cross-link" description="Glycyl lysine isopeptide (Lys-Gly) (interchain with G-Cter in ubiquitin)" evidence="3">
    <location>
        <position position="27"/>
    </location>
</feature>
<feature type="cross-link" description="Glycyl lysine isopeptide (Lys-Gly) (interchain with G-Cter in ubiquitin)" evidence="3">
    <location>
        <position position="29"/>
    </location>
</feature>
<feature type="cross-link" description="Glycyl lysine isopeptide (Lys-Gly) (interchain with G-Cter in ubiquitin)" evidence="3">
    <location>
        <position position="33"/>
    </location>
</feature>
<feature type="cross-link" description="Glycyl lysine isopeptide (Lys-Gly) (interchain with G-Cter in ubiquitin)" evidence="3">
    <location>
        <position position="48"/>
    </location>
</feature>
<feature type="cross-link" description="Glycyl lysine isopeptide (Lys-Gly) (interchain with G-Cter in ubiquitin)" evidence="3">
    <location>
        <position position="63"/>
    </location>
</feature>
<feature type="cross-link" description="Glycyl lysine isopeptide (Gly-Lys) (interchain with K-? in acceptor proteins)">
    <location>
        <position position="76"/>
    </location>
</feature>
<protein>
    <recommendedName>
        <fullName evidence="6">Ubiquitin-ribosomal protein eL40 fusion protein</fullName>
    </recommendedName>
    <alternativeName>
        <fullName>Ubiquitin A-52 residue ribosomal protein fusion product 1</fullName>
    </alternativeName>
    <component>
        <recommendedName>
            <fullName>Ubiquitin</fullName>
        </recommendedName>
    </component>
    <component>
        <recommendedName>
            <fullName evidence="6">Large ribosomal subunit protein eL40</fullName>
        </recommendedName>
        <alternativeName>
            <fullName>60S ribosomal protein L40</fullName>
        </alternativeName>
        <alternativeName>
            <fullName>CEP52</fullName>
        </alternativeName>
    </component>
</protein>
<proteinExistence type="evidence at protein level"/>